<dbReference type="EMBL" id="X17655">
    <property type="protein sequence ID" value="CAA35647.1"/>
    <property type="molecule type" value="Genomic_DNA"/>
</dbReference>
<dbReference type="EMBL" id="X72021">
    <property type="protein sequence ID" value="CAA50899.1"/>
    <property type="molecule type" value="Genomic_DNA"/>
</dbReference>
<dbReference type="PIR" id="I39478">
    <property type="entry name" value="I39478"/>
</dbReference>
<dbReference type="RefSeq" id="NP_044463.1">
    <property type="nucleotide sequence ID" value="NC_001797.1"/>
</dbReference>
<dbReference type="RefSeq" id="NP_053002.1">
    <property type="nucleotide sequence ID" value="NC_002136.1"/>
</dbReference>
<dbReference type="RefSeq" id="WP_010890218.1">
    <property type="nucleotide sequence ID" value="NC_002136.1"/>
</dbReference>
<dbReference type="GO" id="GO:0003677">
    <property type="term" value="F:DNA binding"/>
    <property type="evidence" value="ECO:0007669"/>
    <property type="project" value="UniProtKB-KW"/>
</dbReference>
<dbReference type="GO" id="GO:0006260">
    <property type="term" value="P:DNA replication"/>
    <property type="evidence" value="ECO:0007669"/>
    <property type="project" value="UniProtKB-KW"/>
</dbReference>
<dbReference type="InterPro" id="IPR014820">
    <property type="entry name" value="PriCT_1"/>
</dbReference>
<dbReference type="Pfam" id="PF08708">
    <property type="entry name" value="PriCT_1"/>
    <property type="match status" value="1"/>
</dbReference>
<sequence length="496" mass="57409">MNIPFVVETVLHDGLLKYKFKNSKIRSITTKPGKSKGAIFAYRSKKSMIGGRGVVLTSEEAIHENQDTFTHWTPNVYRYGTYADENRSYTKGHSENNLRQINTFFIDFDIHTEKETISASDILTTAIDLGFMPTLIIKSDKGYQAYFVLETPVYVTSKSEFKSVKAAKIISQNIREYFGKSLPVDLTCNHFGIARIPRTDNVEFFDPNYRYSFKEWQDWSFKQTDNKGFTRSSLTVLSGTEGKKQVDEPWFNLLLHETKFSGEKGLVGRNSVMFTLSLAYFSSGYSIETCEYNMFEFNNRLDQPLEEKEVIKIVRSAYSENYQGANREYITILCKAWVSSDLTSKDLFVRQGWFKFKKKRSERQRVHLSEWKEDLMAYISEKSDVYKPYLATTKKEIREVLGIPERTLDKLLKVLKANQEIFFKIKPGRNGGIQLASVKSLLLSIIKLKKEERESYIKALTASFNLERTFIQETLNKLAERPKTDPQLDLFSYDTG</sequence>
<geneLocation type="plasmid">
    <name>pIP501</name>
</geneLocation>
<accession>P18629</accession>
<feature type="chain" id="PRO_0000068335" description="Protein RepR">
    <location>
        <begin position="1"/>
        <end position="496"/>
    </location>
</feature>
<feature type="DNA-binding region" evidence="1">
    <location>
        <begin position="120"/>
        <end position="141"/>
    </location>
</feature>
<evidence type="ECO:0000255" key="1"/>
<gene>
    <name type="primary">repR</name>
</gene>
<comment type="function">
    <text>Essential for replication.</text>
</comment>
<reference key="1">
    <citation type="journal article" date="1990" name="Nucleic Acids Res.">
        <title>Molecular analysis of the replication region of the conjugative Streptococcus agalactiae plasmid pIP501 in Bacillus subtilis. Comparison with plasmids pAM beta 1 and pSM19035.</title>
        <authorList>
            <person name="Brantl S."/>
            <person name="Behnke D."/>
            <person name="Alonso J.C."/>
        </authorList>
    </citation>
    <scope>NUCLEOTIDE SEQUENCE [GENOMIC DNA]</scope>
</reference>
<reference key="2">
    <citation type="journal article" date="1994" name="Gene">
        <title>Complete nucleotide sequence of plasmid pGB3631, a derivative of the Streptococcus agalactiae plasmid pIP501.</title>
        <authorList>
            <person name="Brantl S."/>
            <person name="Kummer C."/>
            <person name="Behnke D."/>
        </authorList>
    </citation>
    <scope>NUCLEOTIDE SEQUENCE [GENOMIC DNA]</scope>
</reference>
<keyword id="KW-0235">DNA replication</keyword>
<keyword id="KW-0238">DNA-binding</keyword>
<keyword id="KW-0614">Plasmid</keyword>
<proteinExistence type="predicted"/>
<protein>
    <recommendedName>
        <fullName>Protein RepR</fullName>
    </recommendedName>
</protein>
<organism>
    <name type="scientific">Streptococcus agalactiae</name>
    <dbReference type="NCBI Taxonomy" id="1311"/>
    <lineage>
        <taxon>Bacteria</taxon>
        <taxon>Bacillati</taxon>
        <taxon>Bacillota</taxon>
        <taxon>Bacilli</taxon>
        <taxon>Lactobacillales</taxon>
        <taxon>Streptococcaceae</taxon>
        <taxon>Streptococcus</taxon>
    </lineage>
</organism>
<name>REPR_STRAG</name>